<keyword id="KW-0030">Aminoacyl-tRNA synthetase</keyword>
<keyword id="KW-0067">ATP-binding</keyword>
<keyword id="KW-0963">Cytoplasm</keyword>
<keyword id="KW-0436">Ligase</keyword>
<keyword id="KW-0460">Magnesium</keyword>
<keyword id="KW-0479">Metal-binding</keyword>
<keyword id="KW-0547">Nucleotide-binding</keyword>
<keyword id="KW-0648">Protein biosynthesis</keyword>
<evidence type="ECO:0000255" key="1">
    <source>
        <dbReference type="HAMAP-Rule" id="MF_00281"/>
    </source>
</evidence>
<protein>
    <recommendedName>
        <fullName evidence="1">Phenylalanine--tRNA ligase alpha subunit</fullName>
        <ecNumber evidence="1">6.1.1.20</ecNumber>
    </recommendedName>
    <alternativeName>
        <fullName evidence="1">Phenylalanyl-tRNA synthetase alpha subunit</fullName>
        <shortName evidence="1">PheRS</shortName>
    </alternativeName>
</protein>
<gene>
    <name evidence="1" type="primary">pheS</name>
    <name type="ordered locus">Cag_1711</name>
</gene>
<name>SYFA_CHLCH</name>
<organism>
    <name type="scientific">Chlorobium chlorochromatii (strain CaD3)</name>
    <dbReference type="NCBI Taxonomy" id="340177"/>
    <lineage>
        <taxon>Bacteria</taxon>
        <taxon>Pseudomonadati</taxon>
        <taxon>Chlorobiota</taxon>
        <taxon>Chlorobiia</taxon>
        <taxon>Chlorobiales</taxon>
        <taxon>Chlorobiaceae</taxon>
        <taxon>Chlorobium/Pelodictyon group</taxon>
        <taxon>Chlorobium</taxon>
    </lineage>
</organism>
<feature type="chain" id="PRO_0000231974" description="Phenylalanine--tRNA ligase alpha subunit">
    <location>
        <begin position="1"/>
        <end position="344"/>
    </location>
</feature>
<feature type="binding site" evidence="1">
    <location>
        <position position="257"/>
    </location>
    <ligand>
        <name>Mg(2+)</name>
        <dbReference type="ChEBI" id="CHEBI:18420"/>
        <note>shared with beta subunit</note>
    </ligand>
</feature>
<accession>Q3APW3</accession>
<comment type="catalytic activity">
    <reaction evidence="1">
        <text>tRNA(Phe) + L-phenylalanine + ATP = L-phenylalanyl-tRNA(Phe) + AMP + diphosphate + H(+)</text>
        <dbReference type="Rhea" id="RHEA:19413"/>
        <dbReference type="Rhea" id="RHEA-COMP:9668"/>
        <dbReference type="Rhea" id="RHEA-COMP:9699"/>
        <dbReference type="ChEBI" id="CHEBI:15378"/>
        <dbReference type="ChEBI" id="CHEBI:30616"/>
        <dbReference type="ChEBI" id="CHEBI:33019"/>
        <dbReference type="ChEBI" id="CHEBI:58095"/>
        <dbReference type="ChEBI" id="CHEBI:78442"/>
        <dbReference type="ChEBI" id="CHEBI:78531"/>
        <dbReference type="ChEBI" id="CHEBI:456215"/>
        <dbReference type="EC" id="6.1.1.20"/>
    </reaction>
</comment>
<comment type="cofactor">
    <cofactor evidence="1">
        <name>Mg(2+)</name>
        <dbReference type="ChEBI" id="CHEBI:18420"/>
    </cofactor>
    <text evidence="1">Binds 2 magnesium ions per tetramer.</text>
</comment>
<comment type="subunit">
    <text evidence="1">Tetramer of two alpha and two beta subunits.</text>
</comment>
<comment type="subcellular location">
    <subcellularLocation>
        <location evidence="1">Cytoplasm</location>
    </subcellularLocation>
</comment>
<comment type="similarity">
    <text evidence="1">Belongs to the class-II aminoacyl-tRNA synthetase family. Phe-tRNA synthetase alpha subunit type 1 subfamily.</text>
</comment>
<sequence>MEERILQAKQEILEAPLTTLAELESFRLHFTVRKGLVAALFGELKNVASADKPRIGQLLNELKQTAESRVSDAEAHLAAAQNSKQQPSLLDLTLPGRRSFCGSEHPVQKVLGDMKSIFNAMGFTIATGPELEVGNYNFDMLNFAPDHPARDMQDTFFVRTGSGNTPDVLLRTHTSPVQIRVMLDEKPPIRVICPGKVYRNEAISARSYCVFHQLEGLYIDKNVSFADLKATIYSFAQQMFGSDVKLRFRPSFFPFTEPSAEVDVTCYLCGGKGCRVCKKSGWLEILGCGMVHPNVLRNCGIDPEEWSGYAFGMGVDRTVLLRYKIDDIRLLFENDVRMLQQFKA</sequence>
<proteinExistence type="inferred from homology"/>
<dbReference type="EC" id="6.1.1.20" evidence="1"/>
<dbReference type="EMBL" id="CP000108">
    <property type="protein sequence ID" value="ABB28962.1"/>
    <property type="molecule type" value="Genomic_DNA"/>
</dbReference>
<dbReference type="SMR" id="Q3APW3"/>
<dbReference type="STRING" id="340177.Cag_1711"/>
<dbReference type="KEGG" id="cch:Cag_1711"/>
<dbReference type="eggNOG" id="COG0016">
    <property type="taxonomic scope" value="Bacteria"/>
</dbReference>
<dbReference type="HOGENOM" id="CLU_025086_0_1_10"/>
<dbReference type="OrthoDB" id="9800719at2"/>
<dbReference type="GO" id="GO:0005737">
    <property type="term" value="C:cytoplasm"/>
    <property type="evidence" value="ECO:0007669"/>
    <property type="project" value="UniProtKB-SubCell"/>
</dbReference>
<dbReference type="GO" id="GO:0005524">
    <property type="term" value="F:ATP binding"/>
    <property type="evidence" value="ECO:0007669"/>
    <property type="project" value="UniProtKB-UniRule"/>
</dbReference>
<dbReference type="GO" id="GO:0000287">
    <property type="term" value="F:magnesium ion binding"/>
    <property type="evidence" value="ECO:0007669"/>
    <property type="project" value="UniProtKB-UniRule"/>
</dbReference>
<dbReference type="GO" id="GO:0004826">
    <property type="term" value="F:phenylalanine-tRNA ligase activity"/>
    <property type="evidence" value="ECO:0007669"/>
    <property type="project" value="UniProtKB-UniRule"/>
</dbReference>
<dbReference type="GO" id="GO:0000049">
    <property type="term" value="F:tRNA binding"/>
    <property type="evidence" value="ECO:0007669"/>
    <property type="project" value="InterPro"/>
</dbReference>
<dbReference type="GO" id="GO:0006432">
    <property type="term" value="P:phenylalanyl-tRNA aminoacylation"/>
    <property type="evidence" value="ECO:0007669"/>
    <property type="project" value="UniProtKB-UniRule"/>
</dbReference>
<dbReference type="CDD" id="cd00496">
    <property type="entry name" value="PheRS_alpha_core"/>
    <property type="match status" value="1"/>
</dbReference>
<dbReference type="Gene3D" id="3.30.930.10">
    <property type="entry name" value="Bira Bifunctional Protein, Domain 2"/>
    <property type="match status" value="1"/>
</dbReference>
<dbReference type="HAMAP" id="MF_00281">
    <property type="entry name" value="Phe_tRNA_synth_alpha1"/>
    <property type="match status" value="1"/>
</dbReference>
<dbReference type="InterPro" id="IPR006195">
    <property type="entry name" value="aa-tRNA-synth_II"/>
</dbReference>
<dbReference type="InterPro" id="IPR045864">
    <property type="entry name" value="aa-tRNA-synth_II/BPL/LPL"/>
</dbReference>
<dbReference type="InterPro" id="IPR004529">
    <property type="entry name" value="Phe-tRNA-synth_IIc_asu"/>
</dbReference>
<dbReference type="InterPro" id="IPR004188">
    <property type="entry name" value="Phe-tRNA_ligase_II_N"/>
</dbReference>
<dbReference type="InterPro" id="IPR022911">
    <property type="entry name" value="Phe_tRNA_ligase_alpha1_bac"/>
</dbReference>
<dbReference type="InterPro" id="IPR002319">
    <property type="entry name" value="Phenylalanyl-tRNA_Synthase"/>
</dbReference>
<dbReference type="InterPro" id="IPR010978">
    <property type="entry name" value="tRNA-bd_arm"/>
</dbReference>
<dbReference type="NCBIfam" id="TIGR00468">
    <property type="entry name" value="pheS"/>
    <property type="match status" value="1"/>
</dbReference>
<dbReference type="PANTHER" id="PTHR11538:SF41">
    <property type="entry name" value="PHENYLALANINE--TRNA LIGASE, MITOCHONDRIAL"/>
    <property type="match status" value="1"/>
</dbReference>
<dbReference type="PANTHER" id="PTHR11538">
    <property type="entry name" value="PHENYLALANYL-TRNA SYNTHETASE"/>
    <property type="match status" value="1"/>
</dbReference>
<dbReference type="Pfam" id="PF02912">
    <property type="entry name" value="Phe_tRNA-synt_N"/>
    <property type="match status" value="1"/>
</dbReference>
<dbReference type="Pfam" id="PF01409">
    <property type="entry name" value="tRNA-synt_2d"/>
    <property type="match status" value="1"/>
</dbReference>
<dbReference type="SUPFAM" id="SSF55681">
    <property type="entry name" value="Class II aaRS and biotin synthetases"/>
    <property type="match status" value="1"/>
</dbReference>
<dbReference type="SUPFAM" id="SSF46589">
    <property type="entry name" value="tRNA-binding arm"/>
    <property type="match status" value="1"/>
</dbReference>
<dbReference type="PROSITE" id="PS50862">
    <property type="entry name" value="AA_TRNA_LIGASE_II"/>
    <property type="match status" value="1"/>
</dbReference>
<reference key="1">
    <citation type="submission" date="2005-08" db="EMBL/GenBank/DDBJ databases">
        <title>Complete sequence of Chlorobium chlorochromatii CaD3.</title>
        <authorList>
            <consortium name="US DOE Joint Genome Institute"/>
            <person name="Copeland A."/>
            <person name="Lucas S."/>
            <person name="Lapidus A."/>
            <person name="Barry K."/>
            <person name="Detter J.C."/>
            <person name="Glavina T."/>
            <person name="Hammon N."/>
            <person name="Israni S."/>
            <person name="Pitluck S."/>
            <person name="Bryant D."/>
            <person name="Schmutz J."/>
            <person name="Larimer F."/>
            <person name="Land M."/>
            <person name="Kyrpides N."/>
            <person name="Ivanova N."/>
            <person name="Richardson P."/>
        </authorList>
    </citation>
    <scope>NUCLEOTIDE SEQUENCE [LARGE SCALE GENOMIC DNA]</scope>
    <source>
        <strain>CaD3</strain>
    </source>
</reference>